<comment type="function">
    <text evidence="1">Necessary for normal cell division and for the maintenance of normal septation.</text>
</comment>
<comment type="cofactor">
    <cofactor evidence="1">
        <name>Mg(2+)</name>
        <dbReference type="ChEBI" id="CHEBI:18420"/>
    </cofactor>
</comment>
<comment type="similarity">
    <text evidence="1">Belongs to the TRAFAC class TrmE-Era-EngA-EngB-Septin-like GTPase superfamily. EngB GTPase family.</text>
</comment>
<feature type="chain" id="PRO_1000079165" description="Probable GTP-binding protein EngB">
    <location>
        <begin position="1"/>
        <end position="198"/>
    </location>
</feature>
<feature type="domain" description="EngB-type G" evidence="1">
    <location>
        <begin position="22"/>
        <end position="195"/>
    </location>
</feature>
<feature type="binding site" evidence="1">
    <location>
        <begin position="30"/>
        <end position="37"/>
    </location>
    <ligand>
        <name>GTP</name>
        <dbReference type="ChEBI" id="CHEBI:37565"/>
    </ligand>
</feature>
<feature type="binding site" evidence="1">
    <location>
        <position position="37"/>
    </location>
    <ligand>
        <name>Mg(2+)</name>
        <dbReference type="ChEBI" id="CHEBI:18420"/>
    </ligand>
</feature>
<feature type="binding site" evidence="1">
    <location>
        <begin position="57"/>
        <end position="61"/>
    </location>
    <ligand>
        <name>GTP</name>
        <dbReference type="ChEBI" id="CHEBI:37565"/>
    </ligand>
</feature>
<feature type="binding site" evidence="1">
    <location>
        <position position="59"/>
    </location>
    <ligand>
        <name>Mg(2+)</name>
        <dbReference type="ChEBI" id="CHEBI:18420"/>
    </ligand>
</feature>
<feature type="binding site" evidence="1">
    <location>
        <begin position="75"/>
        <end position="78"/>
    </location>
    <ligand>
        <name>GTP</name>
        <dbReference type="ChEBI" id="CHEBI:37565"/>
    </ligand>
</feature>
<feature type="binding site" evidence="1">
    <location>
        <begin position="142"/>
        <end position="145"/>
    </location>
    <ligand>
        <name>GTP</name>
        <dbReference type="ChEBI" id="CHEBI:37565"/>
    </ligand>
</feature>
<feature type="binding site" evidence="1">
    <location>
        <begin position="174"/>
        <end position="176"/>
    </location>
    <ligand>
        <name>GTP</name>
        <dbReference type="ChEBI" id="CHEBI:37565"/>
    </ligand>
</feature>
<keyword id="KW-0131">Cell cycle</keyword>
<keyword id="KW-0132">Cell division</keyword>
<keyword id="KW-0342">GTP-binding</keyword>
<keyword id="KW-0460">Magnesium</keyword>
<keyword id="KW-0479">Metal-binding</keyword>
<keyword id="KW-0547">Nucleotide-binding</keyword>
<keyword id="KW-0717">Septation</keyword>
<dbReference type="EMBL" id="CP000721">
    <property type="protein sequence ID" value="ABR33511.1"/>
    <property type="molecule type" value="Genomic_DNA"/>
</dbReference>
<dbReference type="SMR" id="A6LT31"/>
<dbReference type="KEGG" id="cbe:Cbei_1331"/>
<dbReference type="eggNOG" id="COG0218">
    <property type="taxonomic scope" value="Bacteria"/>
</dbReference>
<dbReference type="HOGENOM" id="CLU_033732_3_0_9"/>
<dbReference type="Proteomes" id="UP000000565">
    <property type="component" value="Chromosome"/>
</dbReference>
<dbReference type="GO" id="GO:0005829">
    <property type="term" value="C:cytosol"/>
    <property type="evidence" value="ECO:0007669"/>
    <property type="project" value="TreeGrafter"/>
</dbReference>
<dbReference type="GO" id="GO:0005525">
    <property type="term" value="F:GTP binding"/>
    <property type="evidence" value="ECO:0007669"/>
    <property type="project" value="UniProtKB-UniRule"/>
</dbReference>
<dbReference type="GO" id="GO:0046872">
    <property type="term" value="F:metal ion binding"/>
    <property type="evidence" value="ECO:0007669"/>
    <property type="project" value="UniProtKB-KW"/>
</dbReference>
<dbReference type="GO" id="GO:0000917">
    <property type="term" value="P:division septum assembly"/>
    <property type="evidence" value="ECO:0007669"/>
    <property type="project" value="UniProtKB-KW"/>
</dbReference>
<dbReference type="CDD" id="cd01876">
    <property type="entry name" value="YihA_EngB"/>
    <property type="match status" value="1"/>
</dbReference>
<dbReference type="FunFam" id="3.40.50.300:FF:000098">
    <property type="entry name" value="Probable GTP-binding protein EngB"/>
    <property type="match status" value="1"/>
</dbReference>
<dbReference type="Gene3D" id="3.40.50.300">
    <property type="entry name" value="P-loop containing nucleotide triphosphate hydrolases"/>
    <property type="match status" value="1"/>
</dbReference>
<dbReference type="HAMAP" id="MF_00321">
    <property type="entry name" value="GTPase_EngB"/>
    <property type="match status" value="1"/>
</dbReference>
<dbReference type="InterPro" id="IPR030393">
    <property type="entry name" value="G_ENGB_dom"/>
</dbReference>
<dbReference type="InterPro" id="IPR006073">
    <property type="entry name" value="GTP-bd"/>
</dbReference>
<dbReference type="InterPro" id="IPR019987">
    <property type="entry name" value="GTP-bd_ribosome_bio_YsxC"/>
</dbReference>
<dbReference type="InterPro" id="IPR027417">
    <property type="entry name" value="P-loop_NTPase"/>
</dbReference>
<dbReference type="NCBIfam" id="TIGR03598">
    <property type="entry name" value="GTPase_YsxC"/>
    <property type="match status" value="1"/>
</dbReference>
<dbReference type="PANTHER" id="PTHR11649:SF13">
    <property type="entry name" value="ENGB-TYPE G DOMAIN-CONTAINING PROTEIN"/>
    <property type="match status" value="1"/>
</dbReference>
<dbReference type="PANTHER" id="PTHR11649">
    <property type="entry name" value="MSS1/TRME-RELATED GTP-BINDING PROTEIN"/>
    <property type="match status" value="1"/>
</dbReference>
<dbReference type="Pfam" id="PF01926">
    <property type="entry name" value="MMR_HSR1"/>
    <property type="match status" value="1"/>
</dbReference>
<dbReference type="SUPFAM" id="SSF52540">
    <property type="entry name" value="P-loop containing nucleoside triphosphate hydrolases"/>
    <property type="match status" value="1"/>
</dbReference>
<dbReference type="PROSITE" id="PS51706">
    <property type="entry name" value="G_ENGB"/>
    <property type="match status" value="1"/>
</dbReference>
<gene>
    <name evidence="1" type="primary">engB</name>
    <name type="ordered locus">Cbei_1331</name>
</gene>
<sequence length="198" mass="22758">MRIKKSDFITSAVKKNQYPIDNRVEVAFVGRSNVGKSSLINSLTNRKKLAKVSQTPGKTRLVNFFLINDDFYLVDLPGYGYAKVSKAEKDSWGKTVEMYLTGREQLKRVVLLVDSRHKPTGDDIIMHEWIKHFGYDVIVVATKSDKLTRNELKKNEKVIKETLKLNSDDKLYFFSSLNKDGKDELIDNLFLEFATDLD</sequence>
<evidence type="ECO:0000255" key="1">
    <source>
        <dbReference type="HAMAP-Rule" id="MF_00321"/>
    </source>
</evidence>
<proteinExistence type="inferred from homology"/>
<accession>A6LT31</accession>
<reference key="1">
    <citation type="submission" date="2007-06" db="EMBL/GenBank/DDBJ databases">
        <title>Complete sequence of Clostridium beijerinckii NCIMB 8052.</title>
        <authorList>
            <consortium name="US DOE Joint Genome Institute"/>
            <person name="Copeland A."/>
            <person name="Lucas S."/>
            <person name="Lapidus A."/>
            <person name="Barry K."/>
            <person name="Detter J.C."/>
            <person name="Glavina del Rio T."/>
            <person name="Hammon N."/>
            <person name="Israni S."/>
            <person name="Dalin E."/>
            <person name="Tice H."/>
            <person name="Pitluck S."/>
            <person name="Sims D."/>
            <person name="Brettin T."/>
            <person name="Bruce D."/>
            <person name="Tapia R."/>
            <person name="Brainard J."/>
            <person name="Schmutz J."/>
            <person name="Larimer F."/>
            <person name="Land M."/>
            <person name="Hauser L."/>
            <person name="Kyrpides N."/>
            <person name="Mikhailova N."/>
            <person name="Bennet G."/>
            <person name="Cann I."/>
            <person name="Chen J.-S."/>
            <person name="Contreras A.L."/>
            <person name="Jones D."/>
            <person name="Kashket E."/>
            <person name="Mitchell W."/>
            <person name="Stoddard S."/>
            <person name="Schwarz W."/>
            <person name="Qureshi N."/>
            <person name="Young M."/>
            <person name="Shi Z."/>
            <person name="Ezeji T."/>
            <person name="White B."/>
            <person name="Blaschek H."/>
            <person name="Richardson P."/>
        </authorList>
    </citation>
    <scope>NUCLEOTIDE SEQUENCE [LARGE SCALE GENOMIC DNA]</scope>
    <source>
        <strain>ATCC 51743 / NCIMB 8052</strain>
    </source>
</reference>
<organism>
    <name type="scientific">Clostridium beijerinckii (strain ATCC 51743 / NCIMB 8052)</name>
    <name type="common">Clostridium acetobutylicum</name>
    <dbReference type="NCBI Taxonomy" id="290402"/>
    <lineage>
        <taxon>Bacteria</taxon>
        <taxon>Bacillati</taxon>
        <taxon>Bacillota</taxon>
        <taxon>Clostridia</taxon>
        <taxon>Eubacteriales</taxon>
        <taxon>Clostridiaceae</taxon>
        <taxon>Clostridium</taxon>
    </lineage>
</organism>
<protein>
    <recommendedName>
        <fullName evidence="1">Probable GTP-binding protein EngB</fullName>
    </recommendedName>
</protein>
<name>ENGB_CLOB8</name>